<organism>
    <name type="scientific">Homo sapiens</name>
    <name type="common">Human</name>
    <dbReference type="NCBI Taxonomy" id="9606"/>
    <lineage>
        <taxon>Eukaryota</taxon>
        <taxon>Metazoa</taxon>
        <taxon>Chordata</taxon>
        <taxon>Craniata</taxon>
        <taxon>Vertebrata</taxon>
        <taxon>Euteleostomi</taxon>
        <taxon>Mammalia</taxon>
        <taxon>Eutheria</taxon>
        <taxon>Euarchontoglires</taxon>
        <taxon>Primates</taxon>
        <taxon>Haplorrhini</taxon>
        <taxon>Catarrhini</taxon>
        <taxon>Hominidae</taxon>
        <taxon>Homo</taxon>
    </lineage>
</organism>
<accession>O43581</accession>
<accession>F5GZC2</accession>
<accession>F5GZU9</accession>
<accession>F5H126</accession>
<accession>F5H1N2</accession>
<accession>F5H6C1</accession>
<accession>Q08AH6</accession>
<evidence type="ECO:0000250" key="1">
    <source>
        <dbReference type="UniProtKB" id="Q62747"/>
    </source>
</evidence>
<evidence type="ECO:0000250" key="2">
    <source>
        <dbReference type="UniProtKB" id="Q9R0N7"/>
    </source>
</evidence>
<evidence type="ECO:0000255" key="3"/>
<evidence type="ECO:0000255" key="4">
    <source>
        <dbReference type="PROSITE-ProRule" id="PRU00041"/>
    </source>
</evidence>
<evidence type="ECO:0000256" key="5">
    <source>
        <dbReference type="SAM" id="MobiDB-lite"/>
    </source>
</evidence>
<evidence type="ECO:0000269" key="6">
    <source>
    </source>
</evidence>
<evidence type="ECO:0000269" key="7">
    <source>
    </source>
</evidence>
<evidence type="ECO:0000269" key="8">
    <source>
    </source>
</evidence>
<evidence type="ECO:0000269" key="9">
    <source>
    </source>
</evidence>
<evidence type="ECO:0000269" key="10">
    <source>
    </source>
</evidence>
<evidence type="ECO:0000269" key="11">
    <source>
    </source>
</evidence>
<evidence type="ECO:0000269" key="12">
    <source>
    </source>
</evidence>
<evidence type="ECO:0000269" key="13">
    <source>
    </source>
</evidence>
<evidence type="ECO:0000303" key="14">
    <source>
    </source>
</evidence>
<evidence type="ECO:0000303" key="15">
    <source>
    </source>
</evidence>
<evidence type="ECO:0000305" key="16"/>
<evidence type="ECO:0000312" key="17">
    <source>
        <dbReference type="HGNC" id="HGNC:11514"/>
    </source>
</evidence>
<evidence type="ECO:0007829" key="18">
    <source>
        <dbReference type="PDB" id="2D8K"/>
    </source>
</evidence>
<dbReference type="EMBL" id="AF038535">
    <property type="protein sequence ID" value="AAB92667.1"/>
    <property type="status" value="ALT_FRAME"/>
    <property type="molecule type" value="mRNA"/>
</dbReference>
<dbReference type="EMBL" id="AP002754">
    <property type="status" value="NOT_ANNOTATED_CDS"/>
    <property type="molecule type" value="Genomic_DNA"/>
</dbReference>
<dbReference type="EMBL" id="AP003108">
    <property type="status" value="NOT_ANNOTATED_CDS"/>
    <property type="molecule type" value="Genomic_DNA"/>
</dbReference>
<dbReference type="EMBL" id="AP003559">
    <property type="status" value="NOT_ANNOTATED_CDS"/>
    <property type="molecule type" value="Genomic_DNA"/>
</dbReference>
<dbReference type="EMBL" id="CH471076">
    <property type="protein sequence ID" value="EAW73956.1"/>
    <property type="molecule type" value="Genomic_DNA"/>
</dbReference>
<dbReference type="EMBL" id="BC125170">
    <property type="protein sequence ID" value="AAI25171.1"/>
    <property type="molecule type" value="mRNA"/>
</dbReference>
<dbReference type="EMBL" id="BC125171">
    <property type="status" value="NOT_ANNOTATED_CDS"/>
    <property type="molecule type" value="mRNA"/>
</dbReference>
<dbReference type="CCDS" id="CCDS31577.1">
    <molecule id="O43581-1"/>
</dbReference>
<dbReference type="CCDS" id="CCDS58139.1">
    <molecule id="O43581-2"/>
</dbReference>
<dbReference type="CCDS" id="CCDS73298.1">
    <molecule id="O43581-6"/>
</dbReference>
<dbReference type="CCDS" id="CCDS91486.1">
    <molecule id="O43581-5"/>
</dbReference>
<dbReference type="CCDS" id="CCDS91487.1">
    <molecule id="O43581-3"/>
</dbReference>
<dbReference type="RefSeq" id="NP_001238994.1">
    <molecule id="O43581-2"/>
    <property type="nucleotide sequence ID" value="NM_001252065.2"/>
</dbReference>
<dbReference type="RefSeq" id="NP_001287702.1">
    <molecule id="O43581-6"/>
    <property type="nucleotide sequence ID" value="NM_001300773.2"/>
</dbReference>
<dbReference type="RefSeq" id="NP_001352738.1">
    <molecule id="O43581-3"/>
    <property type="nucleotide sequence ID" value="NM_001365809.2"/>
</dbReference>
<dbReference type="RefSeq" id="NP_001397936.1">
    <molecule id="O43581-5"/>
    <property type="nucleotide sequence ID" value="NM_001411007.1"/>
</dbReference>
<dbReference type="RefSeq" id="NP_004191.2">
    <molecule id="O43581-1"/>
    <property type="nucleotide sequence ID" value="NM_004200.3"/>
</dbReference>
<dbReference type="RefSeq" id="XP_005274440.1">
    <property type="nucleotide sequence ID" value="XM_005274383.4"/>
</dbReference>
<dbReference type="RefSeq" id="XP_005274442.1">
    <molecule id="O43581-4"/>
    <property type="nucleotide sequence ID" value="XM_005274385.5"/>
</dbReference>
<dbReference type="RefSeq" id="XP_054226430.1">
    <molecule id="O43581-4"/>
    <property type="nucleotide sequence ID" value="XM_054370455.1"/>
</dbReference>
<dbReference type="PDB" id="2D8K">
    <property type="method" value="NMR"/>
    <property type="chains" value="A=132-259"/>
</dbReference>
<dbReference type="PDBsum" id="2D8K"/>
<dbReference type="SMR" id="O43581"/>
<dbReference type="BioGRID" id="114525">
    <property type="interactions" value="15"/>
</dbReference>
<dbReference type="CORUM" id="O43581"/>
<dbReference type="ELM" id="O43581"/>
<dbReference type="FunCoup" id="O43581">
    <property type="interactions" value="417"/>
</dbReference>
<dbReference type="IntAct" id="O43581">
    <property type="interactions" value="8"/>
</dbReference>
<dbReference type="MINT" id="O43581"/>
<dbReference type="STRING" id="9606.ENSP00000444201"/>
<dbReference type="GlyGen" id="O43581">
    <property type="glycosylation" value="1 site, 1 O-linked glycan (1 site)"/>
</dbReference>
<dbReference type="iPTMnet" id="O43581"/>
<dbReference type="PhosphoSitePlus" id="O43581"/>
<dbReference type="SwissPalm" id="O43581"/>
<dbReference type="BioMuta" id="SYT7"/>
<dbReference type="jPOST" id="O43581"/>
<dbReference type="MassIVE" id="O43581"/>
<dbReference type="PeptideAtlas" id="O43581"/>
<dbReference type="ProteomicsDB" id="24992"/>
<dbReference type="ProteomicsDB" id="25136"/>
<dbReference type="ProteomicsDB" id="25521"/>
<dbReference type="ProteomicsDB" id="25708"/>
<dbReference type="ProteomicsDB" id="27141"/>
<dbReference type="ProteomicsDB" id="49062">
    <molecule id="O43581-1"/>
</dbReference>
<dbReference type="Antibodypedia" id="2220">
    <property type="antibodies" value="257 antibodies from 33 providers"/>
</dbReference>
<dbReference type="DNASU" id="9066"/>
<dbReference type="Ensembl" id="ENST00000263846.8">
    <molecule id="O43581-1"/>
    <property type="protein sequence ID" value="ENSP00000263846.4"/>
    <property type="gene ID" value="ENSG00000011347.10"/>
</dbReference>
<dbReference type="Ensembl" id="ENST00000535826.5">
    <molecule id="O43581-5"/>
    <property type="protein sequence ID" value="ENSP00000437720.1"/>
    <property type="gene ID" value="ENSG00000011347.10"/>
</dbReference>
<dbReference type="Ensembl" id="ENST00000539008.6">
    <molecule id="O43581-3"/>
    <property type="protein sequence ID" value="ENSP00000439694.1"/>
    <property type="gene ID" value="ENSG00000011347.10"/>
</dbReference>
<dbReference type="Ensembl" id="ENST00000540677.5">
    <molecule id="O43581-2"/>
    <property type="protein sequence ID" value="ENSP00000444201.1"/>
    <property type="gene ID" value="ENSG00000011347.10"/>
</dbReference>
<dbReference type="Ensembl" id="ENST00000542670.5">
    <molecule id="O43581-4"/>
    <property type="protein sequence ID" value="ENSP00000444019.1"/>
    <property type="gene ID" value="ENSG00000011347.10"/>
</dbReference>
<dbReference type="Ensembl" id="ENST00000542836.5">
    <molecule id="O43581-6"/>
    <property type="protein sequence ID" value="ENSP00000444568.1"/>
    <property type="gene ID" value="ENSG00000011347.10"/>
</dbReference>
<dbReference type="GeneID" id="9066"/>
<dbReference type="KEGG" id="hsa:9066"/>
<dbReference type="MANE-Select" id="ENST00000539008.6">
    <molecule id="O43581-3"/>
    <property type="protein sequence ID" value="ENSP00000439694.1"/>
    <property type="RefSeq nucleotide sequence ID" value="NM_001365809.2"/>
    <property type="RefSeq protein sequence ID" value="NP_001352738.1"/>
</dbReference>
<dbReference type="UCSC" id="uc001nrv.4">
    <molecule id="O43581-1"/>
    <property type="organism name" value="human"/>
</dbReference>
<dbReference type="UCSC" id="uc001nrx.2">
    <property type="organism name" value="human"/>
</dbReference>
<dbReference type="UCSC" id="uc058cdk.1">
    <property type="organism name" value="human"/>
</dbReference>
<dbReference type="UCSC" id="uc058cdl.1">
    <property type="organism name" value="human"/>
</dbReference>
<dbReference type="UCSC" id="uc058cdm.1">
    <property type="organism name" value="human"/>
</dbReference>
<dbReference type="AGR" id="HGNC:11514"/>
<dbReference type="CTD" id="9066"/>
<dbReference type="DisGeNET" id="9066"/>
<dbReference type="GeneCards" id="SYT7"/>
<dbReference type="HGNC" id="HGNC:11514">
    <property type="gene designation" value="SYT7"/>
</dbReference>
<dbReference type="HPA" id="ENSG00000011347">
    <property type="expression patterns" value="Tissue enhanced (brain, liver, salivary gland)"/>
</dbReference>
<dbReference type="MIM" id="604146">
    <property type="type" value="gene"/>
</dbReference>
<dbReference type="neXtProt" id="NX_O43581"/>
<dbReference type="OpenTargets" id="ENSG00000011347"/>
<dbReference type="PharmGKB" id="PA36295"/>
<dbReference type="VEuPathDB" id="HostDB:ENSG00000011347"/>
<dbReference type="eggNOG" id="KOG1028">
    <property type="taxonomic scope" value="Eukaryota"/>
</dbReference>
<dbReference type="GeneTree" id="ENSGT00940000157180"/>
<dbReference type="HOGENOM" id="CLU_023008_7_2_1"/>
<dbReference type="InParanoid" id="O43581"/>
<dbReference type="OMA" id="MMGHPRA"/>
<dbReference type="OrthoDB" id="270970at2759"/>
<dbReference type="PAN-GO" id="O43581">
    <property type="GO annotations" value="11 GO annotations based on evolutionary models"/>
</dbReference>
<dbReference type="PhylomeDB" id="O43581"/>
<dbReference type="TreeFam" id="TF315600"/>
<dbReference type="PathwayCommons" id="O43581"/>
<dbReference type="Reactome" id="R-HSA-6794361">
    <property type="pathway name" value="Neurexins and neuroligins"/>
</dbReference>
<dbReference type="SignaLink" id="O43581"/>
<dbReference type="BioGRID-ORCS" id="9066">
    <property type="hits" value="10 hits in 1143 CRISPR screens"/>
</dbReference>
<dbReference type="CD-CODE" id="FB4E32DD">
    <property type="entry name" value="Presynaptic clusters and postsynaptic densities"/>
</dbReference>
<dbReference type="ChiTaRS" id="SYT7">
    <property type="organism name" value="human"/>
</dbReference>
<dbReference type="EvolutionaryTrace" id="O43581"/>
<dbReference type="GeneWiki" id="SYT7"/>
<dbReference type="GenomeRNAi" id="9066"/>
<dbReference type="Pharos" id="O43581">
    <property type="development level" value="Tbio"/>
</dbReference>
<dbReference type="PRO" id="PR:O43581"/>
<dbReference type="Proteomes" id="UP000005640">
    <property type="component" value="Chromosome 11"/>
</dbReference>
<dbReference type="RNAct" id="O43581">
    <property type="molecule type" value="protein"/>
</dbReference>
<dbReference type="Bgee" id="ENSG00000011347">
    <property type="expression patterns" value="Expressed in islet of Langerhans and 115 other cell types or tissues"/>
</dbReference>
<dbReference type="ExpressionAtlas" id="O43581">
    <property type="expression patterns" value="baseline and differential"/>
</dbReference>
<dbReference type="GO" id="GO:0030424">
    <property type="term" value="C:axon"/>
    <property type="evidence" value="ECO:0000318"/>
    <property type="project" value="GO_Central"/>
</dbReference>
<dbReference type="GO" id="GO:0005829">
    <property type="term" value="C:cytosol"/>
    <property type="evidence" value="ECO:0007669"/>
    <property type="project" value="GOC"/>
</dbReference>
<dbReference type="GO" id="GO:0031045">
    <property type="term" value="C:dense core granule"/>
    <property type="evidence" value="ECO:0007669"/>
    <property type="project" value="Ensembl"/>
</dbReference>
<dbReference type="GO" id="GO:0032009">
    <property type="term" value="C:early phagosome"/>
    <property type="evidence" value="ECO:0000250"/>
    <property type="project" value="UniProtKB"/>
</dbReference>
<dbReference type="GO" id="GO:0070062">
    <property type="term" value="C:extracellular exosome"/>
    <property type="evidence" value="ECO:0007005"/>
    <property type="project" value="UniProtKB"/>
</dbReference>
<dbReference type="GO" id="GO:0098686">
    <property type="term" value="C:hippocampal mossy fiber to CA3 synapse"/>
    <property type="evidence" value="ECO:0007669"/>
    <property type="project" value="Ensembl"/>
</dbReference>
<dbReference type="GO" id="GO:0005765">
    <property type="term" value="C:lysosomal membrane"/>
    <property type="evidence" value="ECO:0007669"/>
    <property type="project" value="UniProtKB-SubCell"/>
</dbReference>
<dbReference type="GO" id="GO:0005764">
    <property type="term" value="C:lysosome"/>
    <property type="evidence" value="ECO:0000250"/>
    <property type="project" value="UniProtKB"/>
</dbReference>
<dbReference type="GO" id="GO:0005778">
    <property type="term" value="C:peroxisomal membrane"/>
    <property type="evidence" value="ECO:0007669"/>
    <property type="project" value="UniProtKB-SubCell"/>
</dbReference>
<dbReference type="GO" id="GO:0005777">
    <property type="term" value="C:peroxisome"/>
    <property type="evidence" value="ECO:0000250"/>
    <property type="project" value="UniProtKB"/>
</dbReference>
<dbReference type="GO" id="GO:0030670">
    <property type="term" value="C:phagocytic vesicle membrane"/>
    <property type="evidence" value="ECO:0007669"/>
    <property type="project" value="UniProtKB-SubCell"/>
</dbReference>
<dbReference type="GO" id="GO:0005886">
    <property type="term" value="C:plasma membrane"/>
    <property type="evidence" value="ECO:0000318"/>
    <property type="project" value="GO_Central"/>
</dbReference>
<dbReference type="GO" id="GO:0042734">
    <property type="term" value="C:presynaptic membrane"/>
    <property type="evidence" value="ECO:0007669"/>
    <property type="project" value="UniProtKB-SubCell"/>
</dbReference>
<dbReference type="GO" id="GO:0045202">
    <property type="term" value="C:synapse"/>
    <property type="evidence" value="ECO:0000318"/>
    <property type="project" value="GO_Central"/>
</dbReference>
<dbReference type="GO" id="GO:0008021">
    <property type="term" value="C:synaptic vesicle"/>
    <property type="evidence" value="ECO:0000250"/>
    <property type="project" value="UniProtKB"/>
</dbReference>
<dbReference type="GO" id="GO:0030672">
    <property type="term" value="C:synaptic vesicle membrane"/>
    <property type="evidence" value="ECO:0007669"/>
    <property type="project" value="UniProtKB-SubCell"/>
</dbReference>
<dbReference type="GO" id="GO:0005509">
    <property type="term" value="F:calcium ion binding"/>
    <property type="evidence" value="ECO:0007669"/>
    <property type="project" value="Ensembl"/>
</dbReference>
<dbReference type="GO" id="GO:0061891">
    <property type="term" value="F:calcium ion sensor activity"/>
    <property type="evidence" value="ECO:0000318"/>
    <property type="project" value="GO_Central"/>
</dbReference>
<dbReference type="GO" id="GO:0005544">
    <property type="term" value="F:calcium-dependent phospholipid binding"/>
    <property type="evidence" value="ECO:0000250"/>
    <property type="project" value="UniProtKB"/>
</dbReference>
<dbReference type="GO" id="GO:0005516">
    <property type="term" value="F:calmodulin binding"/>
    <property type="evidence" value="ECO:0000250"/>
    <property type="project" value="UniProtKB"/>
</dbReference>
<dbReference type="GO" id="GO:0030276">
    <property type="term" value="F:clathrin binding"/>
    <property type="evidence" value="ECO:0007669"/>
    <property type="project" value="Ensembl"/>
</dbReference>
<dbReference type="GO" id="GO:0005546">
    <property type="term" value="F:phosphatidylinositol-4,5-bisphosphate binding"/>
    <property type="evidence" value="ECO:0000250"/>
    <property type="project" value="UniProtKB"/>
</dbReference>
<dbReference type="GO" id="GO:0000149">
    <property type="term" value="F:SNARE binding"/>
    <property type="evidence" value="ECO:0000318"/>
    <property type="project" value="GO_Central"/>
</dbReference>
<dbReference type="GO" id="GO:0019905">
    <property type="term" value="F:syntaxin binding"/>
    <property type="evidence" value="ECO:0007669"/>
    <property type="project" value="Ensembl"/>
</dbReference>
<dbReference type="GO" id="GO:1990927">
    <property type="term" value="P:calcium ion regulated lysosome exocytosis"/>
    <property type="evidence" value="ECO:0000250"/>
    <property type="project" value="UniProtKB"/>
</dbReference>
<dbReference type="GO" id="GO:0048791">
    <property type="term" value="P:calcium ion-regulated exocytosis of neurotransmitter"/>
    <property type="evidence" value="ECO:0000250"/>
    <property type="project" value="UniProtKB"/>
</dbReference>
<dbReference type="GO" id="GO:0099502">
    <property type="term" value="P:calcium-dependent activation of synaptic vesicle fusion"/>
    <property type="evidence" value="ECO:0000318"/>
    <property type="project" value="GO_Central"/>
</dbReference>
<dbReference type="GO" id="GO:0006909">
    <property type="term" value="P:phagocytosis"/>
    <property type="evidence" value="ECO:0000250"/>
    <property type="project" value="UniProtKB"/>
</dbReference>
<dbReference type="GO" id="GO:0090385">
    <property type="term" value="P:phagosome-lysosome fusion"/>
    <property type="evidence" value="ECO:0000250"/>
    <property type="project" value="UniProtKB"/>
</dbReference>
<dbReference type="GO" id="GO:0001778">
    <property type="term" value="P:plasma membrane repair"/>
    <property type="evidence" value="ECO:0000250"/>
    <property type="project" value="UniProtKB"/>
</dbReference>
<dbReference type="GO" id="GO:0045956">
    <property type="term" value="P:positive regulation of calcium ion-dependent exocytosis"/>
    <property type="evidence" value="ECO:0007669"/>
    <property type="project" value="Ensembl"/>
</dbReference>
<dbReference type="GO" id="GO:0046850">
    <property type="term" value="P:regulation of bone remodeling"/>
    <property type="evidence" value="ECO:0000250"/>
    <property type="project" value="UniProtKB"/>
</dbReference>
<dbReference type="GO" id="GO:0017158">
    <property type="term" value="P:regulation of calcium ion-dependent exocytosis"/>
    <property type="evidence" value="ECO:0000318"/>
    <property type="project" value="GO_Central"/>
</dbReference>
<dbReference type="GO" id="GO:0070092">
    <property type="term" value="P:regulation of glucagon secretion"/>
    <property type="evidence" value="ECO:0000250"/>
    <property type="project" value="UniProtKB"/>
</dbReference>
<dbReference type="GO" id="GO:0050796">
    <property type="term" value="P:regulation of insulin secretion"/>
    <property type="evidence" value="ECO:0000250"/>
    <property type="project" value="UniProtKB"/>
</dbReference>
<dbReference type="GO" id="GO:0050764">
    <property type="term" value="P:regulation of phagocytosis"/>
    <property type="evidence" value="ECO:0000250"/>
    <property type="project" value="UniProtKB"/>
</dbReference>
<dbReference type="GO" id="GO:1900242">
    <property type="term" value="P:regulation of synaptic vesicle endocytosis"/>
    <property type="evidence" value="ECO:0007669"/>
    <property type="project" value="Ensembl"/>
</dbReference>
<dbReference type="GO" id="GO:1990926">
    <property type="term" value="P:short-term synaptic potentiation"/>
    <property type="evidence" value="ECO:0000250"/>
    <property type="project" value="UniProtKB"/>
</dbReference>
<dbReference type="GO" id="GO:0036465">
    <property type="term" value="P:synaptic vesicle recycling"/>
    <property type="evidence" value="ECO:0000250"/>
    <property type="project" value="UniProtKB"/>
</dbReference>
<dbReference type="GO" id="GO:0006906">
    <property type="term" value="P:vesicle fusion"/>
    <property type="evidence" value="ECO:0000318"/>
    <property type="project" value="GO_Central"/>
</dbReference>
<dbReference type="GO" id="GO:0090119">
    <property type="term" value="P:vesicle-mediated cholesterol transport"/>
    <property type="evidence" value="ECO:0000250"/>
    <property type="project" value="UniProtKB"/>
</dbReference>
<dbReference type="GO" id="GO:0016192">
    <property type="term" value="P:vesicle-mediated transport"/>
    <property type="evidence" value="ECO:0000318"/>
    <property type="project" value="GO_Central"/>
</dbReference>
<dbReference type="CDD" id="cd08386">
    <property type="entry name" value="C2A_Synaptotagmin-7"/>
    <property type="match status" value="1"/>
</dbReference>
<dbReference type="CDD" id="cd08405">
    <property type="entry name" value="C2B_Synaptotagmin-7"/>
    <property type="match status" value="1"/>
</dbReference>
<dbReference type="FunFam" id="2.60.40.150:FF:000027">
    <property type="entry name" value="Synaptotagmin 7"/>
    <property type="match status" value="1"/>
</dbReference>
<dbReference type="FunFam" id="2.60.40.150:FF:000028">
    <property type="entry name" value="Synaptotagmin 7"/>
    <property type="match status" value="1"/>
</dbReference>
<dbReference type="Gene3D" id="2.60.40.150">
    <property type="entry name" value="C2 domain"/>
    <property type="match status" value="2"/>
</dbReference>
<dbReference type="InterPro" id="IPR000008">
    <property type="entry name" value="C2_dom"/>
</dbReference>
<dbReference type="InterPro" id="IPR035892">
    <property type="entry name" value="C2_domain_sf"/>
</dbReference>
<dbReference type="InterPro" id="IPR037732">
    <property type="entry name" value="C2A_Synaptotagmin-7"/>
</dbReference>
<dbReference type="InterPro" id="IPR037741">
    <property type="entry name" value="C2B_Synaptotagmin-7"/>
</dbReference>
<dbReference type="InterPro" id="IPR001565">
    <property type="entry name" value="Synaptotagmin"/>
</dbReference>
<dbReference type="PANTHER" id="PTHR10024">
    <property type="entry name" value="SYNAPTOTAGMIN"/>
    <property type="match status" value="1"/>
</dbReference>
<dbReference type="PANTHER" id="PTHR10024:SF344">
    <property type="entry name" value="SYNAPTOTAGMIN-7"/>
    <property type="match status" value="1"/>
</dbReference>
<dbReference type="Pfam" id="PF00168">
    <property type="entry name" value="C2"/>
    <property type="match status" value="2"/>
</dbReference>
<dbReference type="PRINTS" id="PR00360">
    <property type="entry name" value="C2DOMAIN"/>
</dbReference>
<dbReference type="PRINTS" id="PR00399">
    <property type="entry name" value="SYNAPTOTAGMN"/>
</dbReference>
<dbReference type="SMART" id="SM00239">
    <property type="entry name" value="C2"/>
    <property type="match status" value="2"/>
</dbReference>
<dbReference type="SUPFAM" id="SSF49562">
    <property type="entry name" value="C2 domain (Calcium/lipid-binding domain, CaLB)"/>
    <property type="match status" value="2"/>
</dbReference>
<dbReference type="PROSITE" id="PS50004">
    <property type="entry name" value="C2"/>
    <property type="match status" value="2"/>
</dbReference>
<name>SYT7_HUMAN</name>
<gene>
    <name evidence="17" type="primary">SYT7</name>
    <name type="synonym">PCANAP7</name>
</gene>
<proteinExistence type="evidence at protein level"/>
<reference key="1">
    <citation type="journal article" date="1998" name="Genomics">
        <title>Transcript mapping of the human chromosome 11q12-q13.1 gene-rich region identifies several newly described conserved genes.</title>
        <authorList>
            <person name="Cooper P.R."/>
            <person name="Nowak N.J."/>
            <person name="Higgins M.J."/>
            <person name="Church D.M."/>
            <person name="Shows T.B."/>
        </authorList>
    </citation>
    <scope>NUCLEOTIDE SEQUENCE [MRNA] (ISOFORM 1)</scope>
    <scope>VARIANT ASN-332</scope>
</reference>
<reference key="2">
    <citation type="journal article" date="2006" name="Nature">
        <title>Human chromosome 11 DNA sequence and analysis including novel gene identification.</title>
        <authorList>
            <person name="Taylor T.D."/>
            <person name="Noguchi H."/>
            <person name="Totoki Y."/>
            <person name="Toyoda A."/>
            <person name="Kuroki Y."/>
            <person name="Dewar K."/>
            <person name="Lloyd C."/>
            <person name="Itoh T."/>
            <person name="Takeda T."/>
            <person name="Kim D.-W."/>
            <person name="She X."/>
            <person name="Barlow K.F."/>
            <person name="Bloom T."/>
            <person name="Bruford E."/>
            <person name="Chang J.L."/>
            <person name="Cuomo C.A."/>
            <person name="Eichler E."/>
            <person name="FitzGerald M.G."/>
            <person name="Jaffe D.B."/>
            <person name="LaButti K."/>
            <person name="Nicol R."/>
            <person name="Park H.-S."/>
            <person name="Seaman C."/>
            <person name="Sougnez C."/>
            <person name="Yang X."/>
            <person name="Zimmer A.R."/>
            <person name="Zody M.C."/>
            <person name="Birren B.W."/>
            <person name="Nusbaum C."/>
            <person name="Fujiyama A."/>
            <person name="Hattori M."/>
            <person name="Rogers J."/>
            <person name="Lander E.S."/>
            <person name="Sakaki Y."/>
        </authorList>
    </citation>
    <scope>NUCLEOTIDE SEQUENCE [LARGE SCALE GENOMIC DNA]</scope>
</reference>
<reference key="3">
    <citation type="submission" date="2005-07" db="EMBL/GenBank/DDBJ databases">
        <authorList>
            <person name="Mural R.J."/>
            <person name="Istrail S."/>
            <person name="Sutton G.G."/>
            <person name="Florea L."/>
            <person name="Halpern A.L."/>
            <person name="Mobarry C.M."/>
            <person name="Lippert R."/>
            <person name="Walenz B."/>
            <person name="Shatkay H."/>
            <person name="Dew I."/>
            <person name="Miller J.R."/>
            <person name="Flanigan M.J."/>
            <person name="Edwards N.J."/>
            <person name="Bolanos R."/>
            <person name="Fasulo D."/>
            <person name="Halldorsson B.V."/>
            <person name="Hannenhalli S."/>
            <person name="Turner R."/>
            <person name="Yooseph S."/>
            <person name="Lu F."/>
            <person name="Nusskern D.R."/>
            <person name="Shue B.C."/>
            <person name="Zheng X.H."/>
            <person name="Zhong F."/>
            <person name="Delcher A.L."/>
            <person name="Huson D.H."/>
            <person name="Kravitz S.A."/>
            <person name="Mouchard L."/>
            <person name="Reinert K."/>
            <person name="Remington K.A."/>
            <person name="Clark A.G."/>
            <person name="Waterman M.S."/>
            <person name="Eichler E.E."/>
            <person name="Adams M.D."/>
            <person name="Hunkapiller M.W."/>
            <person name="Myers E.W."/>
            <person name="Venter J.C."/>
        </authorList>
    </citation>
    <scope>NUCLEOTIDE SEQUENCE [LARGE SCALE GENOMIC DNA]</scope>
</reference>
<reference key="4">
    <citation type="journal article" date="2004" name="Genome Res.">
        <title>The status, quality, and expansion of the NIH full-length cDNA project: the Mammalian Gene Collection (MGC).</title>
        <authorList>
            <consortium name="The MGC Project Team"/>
        </authorList>
    </citation>
    <scope>NUCLEOTIDE SEQUENCE [LARGE SCALE MRNA] (ISOFORMS 1 AND 2)</scope>
</reference>
<reference key="5">
    <citation type="journal article" date="2001" name="J. Exp. Med.">
        <title>The Exocytosis-regulatory protein synaptotagmin VII mediates cell invasion by Trypanosoma cruzi.</title>
        <authorList>
            <person name="Caler E.V."/>
            <person name="Chakrabarti S."/>
            <person name="Fowler K.T."/>
            <person name="Rao S."/>
            <person name="Andrews N.W."/>
        </authorList>
    </citation>
    <scope>FUNCTION</scope>
</reference>
<reference key="6">
    <citation type="journal article" date="2002" name="Biochem. J.">
        <title>Alternative splicing isoforms of synaptotagmin VII in the mouse, rat and human.</title>
        <authorList>
            <person name="Fukuda M."/>
            <person name="Ogata Y."/>
            <person name="Saegusa C."/>
            <person name="Kanno E."/>
            <person name="Mikoshiba K."/>
        </authorList>
    </citation>
    <scope>ALTERNATIVE SPLICING</scope>
</reference>
<reference key="7">
    <citation type="journal article" date="2005" name="Mol. Biochem. Parasitol.">
        <title>Trypanosoma cruzi invades synaptotagmin VII-deficient cells by a PI-3 kinase independent pathway.</title>
        <authorList>
            <person name="Chakrabarti S."/>
            <person name="Andrade L.O."/>
            <person name="Andrews N.W."/>
        </authorList>
    </citation>
    <scope>FUNCTION</scope>
</reference>
<reference key="8">
    <citation type="journal article" date="2012" name="Biochemistry">
        <title>Hydrophobic contributions to the membrane docking of synaptotagmin 7 C2A domain: mechanistic contrast between isoforms 1 and 7.</title>
        <authorList>
            <person name="Brandt D.S."/>
            <person name="Coffman M.D."/>
            <person name="Falke J.J."/>
            <person name="Knight J.D."/>
        </authorList>
    </citation>
    <scope>DOMAIN</scope>
</reference>
<reference key="9">
    <citation type="journal article" date="2014" name="Biochemistry">
        <title>Lateral diffusion of proteins on supported lipid bilayers: additive friction of synaptotagmin 7 C2A-C2B tandem domains.</title>
        <authorList>
            <person name="Vasquez J.K."/>
            <person name="Chantranuvatana K."/>
            <person name="Giardina D.T."/>
            <person name="Coffman M.D."/>
            <person name="Knight J.D."/>
        </authorList>
    </citation>
    <scope>DOMAIN</scope>
</reference>
<reference key="10">
    <citation type="journal article" date="2015" name="Biochemistry">
        <title>Membrane docking of the synaptotagmin 7 C2A domain: electron paramagnetic resonance measurements show contributions from two membrane binding loops.</title>
        <authorList>
            <person name="Osterberg J.R."/>
            <person name="Chon N.L."/>
            <person name="Boo A."/>
            <person name="Maynard F.A."/>
            <person name="Lin H."/>
            <person name="Knight J.D."/>
        </authorList>
    </citation>
    <scope>DOMAIN</scope>
</reference>
<reference key="11">
    <citation type="journal article" date="2015" name="Biochemistry">
        <title>Membrane docking of the synaptotagmin 7 C2A Domain: computation reveals interplay between electrostatic and hydrophobic contributions.</title>
        <authorList>
            <person name="Chon N.L."/>
            <person name="Osterberg J.R."/>
            <person name="Henderson J."/>
            <person name="Khan H.M."/>
            <person name="Reuter N."/>
            <person name="Knight J.D."/>
            <person name="Lin H."/>
        </authorList>
    </citation>
    <scope>DOMAIN</scope>
</reference>
<reference key="12">
    <citation type="submission" date="2006-06" db="PDB data bank">
        <title>Solution structure of the first C2 domain of synaptotagmin VII.</title>
        <authorList>
            <consortium name="RIKEN structural genomics initiative (RSGI)"/>
        </authorList>
    </citation>
    <scope>STRUCTURE BY NMR OF 132-259</scope>
</reference>
<comment type="function">
    <text evidence="1 2 6 8">Ca(2+) sensor involved in Ca(2+)-dependent exocytosis of secretory and synaptic vesicles through Ca(2+) and phospholipid binding to the C2 domain (By similarity). Ca(2+) induces binding of the C2-domains to phospholipid membranes and to assembled SNARE-complexes; both actions contribute to triggering exocytosis (By similarity). SYT7 binds Ca(2+) with high affinity and slow kinetics compared to other synaptotagmins (By similarity). Involved in Ca(2+)-triggered lysosomal exocytosis, a major component of the plasma membrane repair (PubMed:11342594). Ca(2+)-regulated delivery of lysosomal membranes to the cell surface is also involved in the phagocytic uptake of particles by macrophages (By similarity). Ca(2+)-triggered lysosomal exocytosis also plays a role in bone remodeling by regulating secretory pathways in osteoclasts and osteoblasts (By similarity). In case of infection, involved in participates cell invasion by Trypanosoma cruzi via Ca(2+)-triggered lysosomal exocytosis (PubMed:11342594, PubMed:15811535). Involved in cholesterol transport from lysosome to peroxisome by promoting membrane contacts between lysosomes and peroxisomes: probably acts by promoting vesicle fusion by binding phosphatidylinositol-4,5-bisphosphate on peroxisomal membranes (By similarity). Acts as a key mediator of synaptic facilitation, a process also named short-term synaptic potentiation: synaptic facilitation takes place at synapses with a low initial release probability and is caused by influx of Ca(2+) into the axon terminal after spike generation, increasing the release probability of neurotransmitters (By similarity). Probably mediates synaptic facilitation by directly increasing the probability of release (By similarity). May also contribute to synaptic facilitation by regulating synaptic vesicle replenishment, a process required to ensure that synaptic vesicles are ready for the arrival of the next action potential: SYT7 is required for synaptic vesicle replenishment by acting as a sensor for Ca(2+) and by forming a complex with calmodulin (By similarity). Also acts as a regulator of Ca(2+)-dependent insulin and glucagon secretion in beta-cells (By similarity). Triggers exocytosis by promoting fusion pore opening and fusion pore expansion in chromaffin cells (By similarity). Also regulates the secretion of some non-synaptic secretory granules of specialized cells (By similarity).</text>
</comment>
<comment type="cofactor">
    <cofactor evidence="4">
        <name>Ca(2+)</name>
        <dbReference type="ChEBI" id="CHEBI:29108"/>
    </cofactor>
    <text evidence="4">Binds 3 Ca(2+) ions per C2 domain.</text>
</comment>
<comment type="subunit">
    <text evidence="2">Homodimer. Can also form heterodimers with SYT6, SYT9 and SYT10. Interacts with calmodulin (CALM1, CALM2 or CALM3). Interacts with CD63; required for localization to lysosomes. Interacts with APP (By similarity).</text>
</comment>
<comment type="interaction">
    <interactant intactId="EBI-10184345">
        <id>O43581</id>
    </interactant>
    <interactant intactId="EBI-747107">
        <id>Q8IUQ4</id>
        <label>SIAH1</label>
    </interactant>
    <organismsDiffer>false</organismsDiffer>
    <experiments>3</experiments>
</comment>
<comment type="subcellular location">
    <subcellularLocation>
        <location evidence="1">Cell membrane</location>
        <topology evidence="3">Single-pass membrane protein</topology>
    </subcellularLocation>
    <subcellularLocation>
        <location evidence="2">Presynaptic cell membrane</location>
        <topology evidence="3">Single-pass membrane protein</topology>
    </subcellularLocation>
    <subcellularLocation>
        <location evidence="2">Cytoplasmic vesicle</location>
        <location evidence="2">Secretory vesicle</location>
        <location evidence="2">Synaptic vesicle membrane</location>
        <topology evidence="3">Single-pass membrane protein</topology>
    </subcellularLocation>
    <subcellularLocation>
        <location evidence="2">Lysosome membrane</location>
        <topology evidence="3">Single-pass membrane protein</topology>
    </subcellularLocation>
    <subcellularLocation>
        <location evidence="2">Cytoplasmic vesicle</location>
        <location evidence="2">Phagosome membrane</location>
        <topology evidence="3">Single-pass membrane protein</topology>
    </subcellularLocation>
    <subcellularLocation>
        <location evidence="2">Peroxisome membrane</location>
        <topology evidence="3">Single-pass membrane protein</topology>
    </subcellularLocation>
    <subcellularLocation>
        <location evidence="1">Cytoplasmic vesicle</location>
        <location evidence="1">Secretory vesicle membrane</location>
        <topology evidence="3">Single-pass membrane protein</topology>
    </subcellularLocation>
    <text evidence="2">Localization to lysosomes is dependent on N-terminal palmitoylation and interaction with CD63.</text>
</comment>
<comment type="alternative products">
    <event type="alternative splicing"/>
    <isoform>
        <id>O43581-1</id>
        <name>1</name>
        <sequence type="displayed"/>
    </isoform>
    <isoform>
        <id>O43581-2</id>
        <name>2</name>
        <sequence type="described" ref="VSP_045991"/>
    </isoform>
    <isoform>
        <id>O43581-3</id>
        <name>3</name>
        <sequence type="described" ref="VSP_058233"/>
    </isoform>
    <isoform>
        <id>O43581-4</id>
        <name>4</name>
        <sequence type="described" ref="VSP_058234"/>
    </isoform>
    <isoform>
        <id>O43581-5</id>
        <name>5</name>
        <sequence type="described" ref="VSP_058231"/>
    </isoform>
    <isoform>
        <id>O43581-6</id>
        <name>6</name>
        <name evidence="14">Synaptotagmin VIIbeta</name>
        <name evidence="16">Syt7beta</name>
        <sequence type="described" ref="VSP_058232"/>
    </isoform>
</comment>
<comment type="tissue specificity">
    <text>Expressed in a variety of adult and fetal tissues.</text>
</comment>
<comment type="domain">
    <text evidence="9 10 11 12">The C2 domains bind Ca(2+) and membranes. Binding to membranes involves Ca(2+)-dependent phospholipid binding. Compared to other members of the family, the C2 domains of SYT7 dock and insert into cellular membranes in response to intracellular Ca(2+) concentrations that are lower than those required for other synaptotagmins (PubMed:22966849). The two C2 domains bind independently to planar membranes, without interdomain cooperativity (PubMed:25437758). Moreover, SYT7 C2 domains insert more deeply into membranes compared to other synaptotagmins (PubMed:26322740, PubMed:26333120).</text>
</comment>
<comment type="PTM">
    <text evidence="2">Palmitoylated at its vesicular N-terminus; palmitoylation is required for localization to lysosome and phagocytosis in macrophages.</text>
</comment>
<comment type="miscellaneous">
    <molecule>Isoform 1</molecule>
    <text evidence="7">Major isoform.</text>
</comment>
<comment type="similarity">
    <text evidence="16">Belongs to the synaptotagmin family.</text>
</comment>
<comment type="sequence caution" evidence="16">
    <conflict type="frameshift">
        <sequence resource="EMBL-CDS" id="AAB92667"/>
    </conflict>
</comment>
<protein>
    <recommendedName>
        <fullName evidence="16">Synaptotagmin-7</fullName>
    </recommendedName>
    <alternativeName>
        <fullName>IPCA-7</fullName>
    </alternativeName>
    <alternativeName>
        <fullName>Prostate cancer-associated protein 7</fullName>
    </alternativeName>
    <alternativeName>
        <fullName>Synaptotagmin VII</fullName>
        <shortName>SytVII</shortName>
    </alternativeName>
</protein>
<feature type="chain" id="PRO_0000183957" description="Synaptotagmin-7">
    <location>
        <begin position="1"/>
        <end position="403"/>
    </location>
</feature>
<feature type="topological domain" description="Vesicular" evidence="3">
    <location>
        <begin position="1"/>
        <end position="16"/>
    </location>
</feature>
<feature type="transmembrane region" description="Helical" evidence="3">
    <location>
        <begin position="17"/>
        <end position="37"/>
    </location>
</feature>
<feature type="topological domain" description="Cytoplasmic" evidence="3">
    <location>
        <begin position="38"/>
        <end position="403"/>
    </location>
</feature>
<feature type="domain" description="C2 1" evidence="4">
    <location>
        <begin position="135"/>
        <end position="255"/>
    </location>
</feature>
<feature type="domain" description="C2 2" evidence="4">
    <location>
        <begin position="266"/>
        <end position="399"/>
    </location>
</feature>
<feature type="region of interest" description="Disordered" evidence="5">
    <location>
        <begin position="53"/>
        <end position="106"/>
    </location>
</feature>
<feature type="compositionally biased region" description="Basic and acidic residues" evidence="5">
    <location>
        <begin position="90"/>
        <end position="100"/>
    </location>
</feature>
<feature type="binding site" evidence="4">
    <location>
        <position position="166"/>
    </location>
    <ligand>
        <name>Ca(2+)</name>
        <dbReference type="ChEBI" id="CHEBI:29108"/>
        <label>1</label>
    </ligand>
</feature>
<feature type="binding site" evidence="4">
    <location>
        <position position="166"/>
    </location>
    <ligand>
        <name>Ca(2+)</name>
        <dbReference type="ChEBI" id="CHEBI:29108"/>
        <label>2</label>
    </ligand>
</feature>
<feature type="binding site" evidence="4">
    <location>
        <position position="172"/>
    </location>
    <ligand>
        <name>Ca(2+)</name>
        <dbReference type="ChEBI" id="CHEBI:29108"/>
        <label>1</label>
    </ligand>
</feature>
<feature type="binding site" evidence="4">
    <location>
        <position position="225"/>
    </location>
    <ligand>
        <name>Ca(2+)</name>
        <dbReference type="ChEBI" id="CHEBI:29108"/>
        <label>1</label>
    </ligand>
</feature>
<feature type="binding site" evidence="4">
    <location>
        <position position="225"/>
    </location>
    <ligand>
        <name>Ca(2+)</name>
        <dbReference type="ChEBI" id="CHEBI:29108"/>
        <label>2</label>
    </ligand>
</feature>
<feature type="binding site" evidence="4">
    <location>
        <position position="227"/>
    </location>
    <ligand>
        <name>Ca(2+)</name>
        <dbReference type="ChEBI" id="CHEBI:29108"/>
        <label>1</label>
    </ligand>
</feature>
<feature type="binding site" evidence="4">
    <location>
        <position position="227"/>
    </location>
    <ligand>
        <name>Ca(2+)</name>
        <dbReference type="ChEBI" id="CHEBI:29108"/>
        <label>2</label>
    </ligand>
</feature>
<feature type="binding site" evidence="4">
    <location>
        <position position="227"/>
    </location>
    <ligand>
        <name>Ca(2+)</name>
        <dbReference type="ChEBI" id="CHEBI:29108"/>
        <label>3</label>
    </ligand>
</feature>
<feature type="binding site" evidence="4">
    <location>
        <position position="230"/>
    </location>
    <ligand>
        <name>Ca(2+)</name>
        <dbReference type="ChEBI" id="CHEBI:29108"/>
        <label>3</label>
    </ligand>
</feature>
<feature type="binding site" evidence="4">
    <location>
        <position position="233"/>
    </location>
    <ligand>
        <name>Ca(2+)</name>
        <dbReference type="ChEBI" id="CHEBI:29108"/>
        <label>2</label>
    </ligand>
</feature>
<feature type="binding site" evidence="4">
    <location>
        <position position="233"/>
    </location>
    <ligand>
        <name>Ca(2+)</name>
        <dbReference type="ChEBI" id="CHEBI:29108"/>
        <label>3</label>
    </ligand>
</feature>
<feature type="binding site" evidence="4">
    <location>
        <position position="297"/>
    </location>
    <ligand>
        <name>Ca(2+)</name>
        <dbReference type="ChEBI" id="CHEBI:29108"/>
        <label>4</label>
    </ligand>
</feature>
<feature type="binding site" evidence="4">
    <location>
        <position position="297"/>
    </location>
    <ligand>
        <name>Ca(2+)</name>
        <dbReference type="ChEBI" id="CHEBI:29108"/>
        <label>5</label>
    </ligand>
</feature>
<feature type="binding site" evidence="4">
    <location>
        <position position="303"/>
    </location>
    <ligand>
        <name>Ca(2+)</name>
        <dbReference type="ChEBI" id="CHEBI:29108"/>
        <label>4</label>
    </ligand>
</feature>
<feature type="binding site" evidence="4">
    <location>
        <position position="357"/>
    </location>
    <ligand>
        <name>Ca(2+)</name>
        <dbReference type="ChEBI" id="CHEBI:29108"/>
        <label>4</label>
    </ligand>
</feature>
<feature type="binding site" evidence="4">
    <location>
        <position position="357"/>
    </location>
    <ligand>
        <name>Ca(2+)</name>
        <dbReference type="ChEBI" id="CHEBI:29108"/>
        <label>5</label>
    </ligand>
</feature>
<feature type="binding site" evidence="4">
    <location>
        <position position="359"/>
    </location>
    <ligand>
        <name>Ca(2+)</name>
        <dbReference type="ChEBI" id="CHEBI:29108"/>
        <label>4</label>
    </ligand>
</feature>
<feature type="binding site" evidence="4">
    <location>
        <position position="359"/>
    </location>
    <ligand>
        <name>Ca(2+)</name>
        <dbReference type="ChEBI" id="CHEBI:29108"/>
        <label>5</label>
    </ligand>
</feature>
<feature type="binding site" evidence="4">
    <location>
        <position position="359"/>
    </location>
    <ligand>
        <name>Ca(2+)</name>
        <dbReference type="ChEBI" id="CHEBI:29108"/>
        <label>6</label>
    </ligand>
</feature>
<feature type="binding site" evidence="4">
    <location>
        <position position="362"/>
    </location>
    <ligand>
        <name>Ca(2+)</name>
        <dbReference type="ChEBI" id="CHEBI:29108"/>
        <label>6</label>
    </ligand>
</feature>
<feature type="binding site" evidence="2">
    <location>
        <position position="365"/>
    </location>
    <ligand>
        <name>Ca(2+)</name>
        <dbReference type="ChEBI" id="CHEBI:29108"/>
        <label>4</label>
    </ligand>
</feature>
<feature type="binding site" evidence="4">
    <location>
        <position position="365"/>
    </location>
    <ligand>
        <name>Ca(2+)</name>
        <dbReference type="ChEBI" id="CHEBI:29108"/>
        <label>6</label>
    </ligand>
</feature>
<feature type="modified residue" description="Phosphoserine" evidence="2">
    <location>
        <position position="52"/>
    </location>
</feature>
<feature type="modified residue" description="Phosphothreonine" evidence="2">
    <location>
        <position position="58"/>
    </location>
</feature>
<feature type="modified residue" description="Phosphoserine" evidence="2">
    <location>
        <position position="61"/>
    </location>
</feature>
<feature type="modified residue" description="Phosphoserine" evidence="1">
    <location>
        <position position="119"/>
    </location>
</feature>
<feature type="modified residue" description="Phosphoserine" evidence="2">
    <location>
        <position position="122"/>
    </location>
</feature>
<feature type="splice variant" id="VSP_045991" description="In isoform 2." evidence="15">
    <original>I</original>
    <variation>INGTLLSGAKVAAAAGLAVEREGRLGEKPAPVPPPGEDALRSGGAAPSEPGSGGKAGRGRWRTVQSHLAAGKLNLS</variation>
    <location>
        <position position="71"/>
    </location>
</feature>
<feature type="splice variant" id="VSP_058231" description="In isoform 5.">
    <original>I</original>
    <variation>INDLDRDFWNNNESTVQQKWSSYPPKEFILNISPYAPYGDPRLSLNGTLLSGAKVAAAAGLAVEREGRLGEKPAPVPPPGEDALRSGGAAPSEPGSGGKAGRGRWRTVQSHLAAGKLNLS</variation>
    <location>
        <position position="71"/>
    </location>
</feature>
<feature type="splice variant" id="VSP_058232" description="In isoform 6.">
    <original>I</original>
    <variation>INDLDRDFWNNNESTVQQKWSSYPPKEFILNISPYAPYGDPRLSL</variation>
    <location>
        <position position="71"/>
    </location>
</feature>
<feature type="splice variant" id="VSP_058233" description="In isoform 3.">
    <original>K</original>
    <variation>NDLDRDFWNNNESTVQQKWSSYPPKEFILNISPYAPYGDPRLSLNGTLLSGAKVAAAAGLAVEREGRLGEKPAPVPPPGEDALRSGGAAPSEPGSGGKAGRGRWRTVQSHLAAGKLNLSNFEDSTLSTATTLESIPSSTGEPKCQRPRTLMRQQSLQQPLSQHQRGRQPSQPTTSQSLGQLQAHMASAPGPNPRAYGRGQARQGTSAGSKYRAAGGRSRSNPGSWDHVVGQIRNRGLDMKSFLEGRMVVLSLVLGLSEQDDFANIPDLQNPGTQQNQNAQGDKR</variation>
    <location>
        <position position="72"/>
    </location>
</feature>
<feature type="splice variant" id="VSP_058234" description="In isoform 4.">
    <original>K</original>
    <variation>NDLDRDFWNNNESTVQQKWSSYPPKEFILNISPYAPYGDPRLSLNFEDSTLSTATTLESIPSSTGEPKCQRPRTLMRQQSLQQPLSQHQRGRQPSQPTTSQSLGQLQAHMASAPGPNPRAYGRGQARQGTSAGSKYRAAGGRSRSNPGSWDHVVGQIRNRGLDMKSFLEGRMVVLSLVLGLSEQDDFANIPDLQNPGTQQNQNAQGDKR</variation>
    <location>
        <position position="72"/>
    </location>
</feature>
<feature type="sequence variant" id="VAR_052241" description="In dbSNP:rs407740." evidence="13">
    <original>I</original>
    <variation>N</variation>
    <location>
        <position position="332"/>
    </location>
</feature>
<feature type="sequence conflict" description="In Ref. 1; AAB92667." evidence="16" ref="1">
    <original>V</original>
    <variation>L</variation>
    <location>
        <position position="154"/>
    </location>
</feature>
<feature type="sequence conflict" description="In Ref. 1; AAB92667." evidence="16" ref="1">
    <original>E</original>
    <variation>K</variation>
    <location>
        <position position="188"/>
    </location>
</feature>
<feature type="strand" evidence="18">
    <location>
        <begin position="138"/>
        <end position="145"/>
    </location>
</feature>
<feature type="strand" evidence="18">
    <location>
        <begin position="147"/>
        <end position="149"/>
    </location>
</feature>
<feature type="strand" evidence="18">
    <location>
        <begin position="152"/>
        <end position="161"/>
    </location>
</feature>
<feature type="strand" evidence="18">
    <location>
        <begin position="166"/>
        <end position="169"/>
    </location>
</feature>
<feature type="strand" evidence="18">
    <location>
        <begin position="173"/>
        <end position="181"/>
    </location>
</feature>
<feature type="strand" evidence="18">
    <location>
        <begin position="184"/>
        <end position="188"/>
    </location>
</feature>
<feature type="strand" evidence="18">
    <location>
        <begin position="202"/>
        <end position="206"/>
    </location>
</feature>
<feature type="helix" evidence="18">
    <location>
        <begin position="211"/>
        <end position="214"/>
    </location>
</feature>
<feature type="strand" evidence="18">
    <location>
        <begin position="217"/>
        <end position="225"/>
    </location>
</feature>
<feature type="strand" evidence="18">
    <location>
        <begin position="228"/>
        <end position="231"/>
    </location>
</feature>
<feature type="strand" evidence="18">
    <location>
        <begin position="233"/>
        <end position="241"/>
    </location>
</feature>
<feature type="turn" evidence="18">
    <location>
        <begin position="242"/>
        <end position="244"/>
    </location>
</feature>
<feature type="strand" evidence="18">
    <location>
        <begin position="251"/>
        <end position="255"/>
    </location>
</feature>
<sequence>MYRDPEAASPGAPSRDVLLVSAIITVSLSVTVVLCGLCHWCQRKLGKRYKNSLETVGTPDSGRGRSEKKAIKLPAGGKAVNTAPVPGQTPHDESDRRTEPRSSVSDLVNSLTSEMLMLSPGSEEDEAHEGCSRENLGRIQFSVGYNFQESTLTVKIMKAQELPAKDFSGTSDPFVKIYLLPDKKHKLETKVKRKNLNPHWNETFLFEGFPYEKVVQRILYLQVLDYDRFSRNDPIGEVSIPLNKVDLTQMQTFWKDLKPCSDGSGSRGELLLSLCYNPSANSIIVNIIKARNLKAMDIGGTSDPYVKVWLMYKDKRVEKKKTVTMKRNLNPIFNESFAFDIPTEKLRETTIIITVMDKDKLSRNDVIGKIYLSWKSGPGEVKHWKDMIARPRQPVAQWHQLKA</sequence>
<keyword id="KW-0002">3D-structure</keyword>
<keyword id="KW-0025">Alternative splicing</keyword>
<keyword id="KW-0106">Calcium</keyword>
<keyword id="KW-0112">Calmodulin-binding</keyword>
<keyword id="KW-1003">Cell membrane</keyword>
<keyword id="KW-0966">Cell projection</keyword>
<keyword id="KW-0968">Cytoplasmic vesicle</keyword>
<keyword id="KW-0268">Exocytosis</keyword>
<keyword id="KW-0449">Lipoprotein</keyword>
<keyword id="KW-0458">Lysosome</keyword>
<keyword id="KW-0472">Membrane</keyword>
<keyword id="KW-0479">Metal-binding</keyword>
<keyword id="KW-0564">Palmitate</keyword>
<keyword id="KW-0576">Peroxisome</keyword>
<keyword id="KW-0597">Phosphoprotein</keyword>
<keyword id="KW-1267">Proteomics identification</keyword>
<keyword id="KW-1185">Reference proteome</keyword>
<keyword id="KW-0677">Repeat</keyword>
<keyword id="KW-0770">Synapse</keyword>
<keyword id="KW-0812">Transmembrane</keyword>
<keyword id="KW-1133">Transmembrane helix</keyword>